<keyword id="KW-0249">Electron transport</keyword>
<keyword id="KW-0472">Membrane</keyword>
<keyword id="KW-0496">Mitochondrion</keyword>
<keyword id="KW-0520">NAD</keyword>
<keyword id="KW-0679">Respiratory chain</keyword>
<keyword id="KW-1278">Translocase</keyword>
<keyword id="KW-0812">Transmembrane</keyword>
<keyword id="KW-1133">Transmembrane helix</keyword>
<keyword id="KW-0813">Transport</keyword>
<keyword id="KW-0830">Ubiquinone</keyword>
<protein>
    <recommendedName>
        <fullName>NADH-ubiquinone oxidoreductase chain 6</fullName>
        <ecNumber>7.1.1.2</ecNumber>
    </recommendedName>
    <alternativeName>
        <fullName>NADH dehydrogenase subunit 6</fullName>
    </alternativeName>
</protein>
<evidence type="ECO:0000250" key="1"/>
<evidence type="ECO:0000255" key="2"/>
<evidence type="ECO:0000305" key="3"/>
<geneLocation type="mitochondrion"/>
<comment type="function">
    <text evidence="1">Core subunit of the mitochondrial membrane respiratory chain NADH dehydrogenase (Complex I) that is believed to belong to the minimal assembly required for catalysis. Complex I functions in the transfer of electrons from NADH to the respiratory chain. The immediate electron acceptor for the enzyme is believed to be ubiquinone (By similarity).</text>
</comment>
<comment type="catalytic activity">
    <reaction>
        <text>a ubiquinone + NADH + 5 H(+)(in) = a ubiquinol + NAD(+) + 4 H(+)(out)</text>
        <dbReference type="Rhea" id="RHEA:29091"/>
        <dbReference type="Rhea" id="RHEA-COMP:9565"/>
        <dbReference type="Rhea" id="RHEA-COMP:9566"/>
        <dbReference type="ChEBI" id="CHEBI:15378"/>
        <dbReference type="ChEBI" id="CHEBI:16389"/>
        <dbReference type="ChEBI" id="CHEBI:17976"/>
        <dbReference type="ChEBI" id="CHEBI:57540"/>
        <dbReference type="ChEBI" id="CHEBI:57945"/>
        <dbReference type="EC" id="7.1.1.2"/>
    </reaction>
</comment>
<comment type="subcellular location">
    <subcellularLocation>
        <location evidence="3">Mitochondrion membrane</location>
        <topology evidence="3">Multi-pass membrane protein</topology>
    </subcellularLocation>
</comment>
<comment type="similarity">
    <text evidence="3">Belongs to the complex I subunit 6 family.</text>
</comment>
<reference key="1">
    <citation type="journal article" date="1994" name="Curr. Genet.">
        <title>Intragenic rearrangements in the mitochondrial NADH dehydrogenase subunit 6 gene of vertebrates.</title>
        <authorList>
            <person name="Moum T."/>
            <person name="Willassen N.P."/>
            <person name="Johansen S."/>
        </authorList>
    </citation>
    <scope>NUCLEOTIDE SEQUENCE [GENOMIC DNA]</scope>
</reference>
<dbReference type="EC" id="7.1.1.2"/>
<dbReference type="EMBL" id="X73931">
    <property type="protein sequence ID" value="CAA52136.1"/>
    <property type="molecule type" value="Genomic_DNA"/>
</dbReference>
<dbReference type="PIR" id="S44412">
    <property type="entry name" value="S44412"/>
</dbReference>
<dbReference type="SMR" id="P43202"/>
<dbReference type="GO" id="GO:0031966">
    <property type="term" value="C:mitochondrial membrane"/>
    <property type="evidence" value="ECO:0007669"/>
    <property type="project" value="UniProtKB-SubCell"/>
</dbReference>
<dbReference type="GO" id="GO:0008137">
    <property type="term" value="F:NADH dehydrogenase (ubiquinone) activity"/>
    <property type="evidence" value="ECO:0007669"/>
    <property type="project" value="UniProtKB-EC"/>
</dbReference>
<dbReference type="Gene3D" id="1.20.120.1200">
    <property type="entry name" value="NADH-ubiquinone/plastoquinone oxidoreductase chain 6, subunit NuoJ"/>
    <property type="match status" value="1"/>
</dbReference>
<dbReference type="InterPro" id="IPR050269">
    <property type="entry name" value="ComplexI_Subunit6"/>
</dbReference>
<dbReference type="InterPro" id="IPR001457">
    <property type="entry name" value="NADH_UbQ/plastoQ_OxRdtase_su6"/>
</dbReference>
<dbReference type="InterPro" id="IPR042106">
    <property type="entry name" value="Nuo/plastoQ_OxRdtase_6_NuoJ"/>
</dbReference>
<dbReference type="PANTHER" id="PTHR11435">
    <property type="entry name" value="NADH UBIQUINONE OXIDOREDUCTASE SUBUNIT ND6"/>
    <property type="match status" value="1"/>
</dbReference>
<dbReference type="PANTHER" id="PTHR11435:SF1">
    <property type="entry name" value="NADH-UBIQUINONE OXIDOREDUCTASE CHAIN 6"/>
    <property type="match status" value="1"/>
</dbReference>
<dbReference type="Pfam" id="PF00499">
    <property type="entry name" value="Oxidored_q3"/>
    <property type="match status" value="1"/>
</dbReference>
<sequence length="173" mass="18212">MTYFVLFLSLCFVLGGLAVASNPSPYYGVVGLVLASVVGCGWLLSLGVSFVSLVLFMVYLGGMLVVFVYSVALAADPFPEAWGDWRVVGYGVSFVGVLVMGLVIGGFIGCLNFGVVTVDSVGMFSVRLDFSGVAMFYSCGVGMFLVAGWGLLLTLFVVLELVRGLSRGAIRAV</sequence>
<accession>P43202</accession>
<feature type="chain" id="PRO_0000118300" description="NADH-ubiquinone oxidoreductase chain 6">
    <location>
        <begin position="1"/>
        <end position="173"/>
    </location>
</feature>
<feature type="transmembrane region" description="Helical" evidence="2">
    <location>
        <begin position="1"/>
        <end position="21"/>
    </location>
</feature>
<feature type="transmembrane region" description="Helical" evidence="2">
    <location>
        <begin position="27"/>
        <end position="47"/>
    </location>
</feature>
<feature type="transmembrane region" description="Helical" evidence="2">
    <location>
        <begin position="48"/>
        <end position="68"/>
    </location>
</feature>
<feature type="transmembrane region" description="Helical" evidence="2">
    <location>
        <begin position="91"/>
        <end position="111"/>
    </location>
</feature>
<feature type="transmembrane region" description="Helical" evidence="2">
    <location>
        <begin position="139"/>
        <end position="159"/>
    </location>
</feature>
<gene>
    <name type="primary">MT-ND6</name>
    <name type="synonym">MTND6</name>
    <name type="synonym">NADH6</name>
    <name type="synonym">ND6</name>
</gene>
<organism>
    <name type="scientific">Fratercula cirrhata</name>
    <name type="common">Tufted puffin</name>
    <name type="synonym">Lunda cirrhata</name>
    <dbReference type="NCBI Taxonomy" id="43311"/>
    <lineage>
        <taxon>Eukaryota</taxon>
        <taxon>Metazoa</taxon>
        <taxon>Chordata</taxon>
        <taxon>Craniata</taxon>
        <taxon>Vertebrata</taxon>
        <taxon>Euteleostomi</taxon>
        <taxon>Archelosauria</taxon>
        <taxon>Archosauria</taxon>
        <taxon>Dinosauria</taxon>
        <taxon>Saurischia</taxon>
        <taxon>Theropoda</taxon>
        <taxon>Coelurosauria</taxon>
        <taxon>Aves</taxon>
        <taxon>Neognathae</taxon>
        <taxon>Neoaves</taxon>
        <taxon>Charadriiformes</taxon>
        <taxon>Alcidae</taxon>
        <taxon>Fratercula</taxon>
    </lineage>
</organism>
<name>NU6M_FRACI</name>
<proteinExistence type="inferred from homology"/>